<protein>
    <recommendedName>
        <fullName>T-cell leukemia translocation-altered gene protein homolog</fullName>
    </recommendedName>
</protein>
<keyword id="KW-0472">Membrane</keyword>
<keyword id="KW-1185">Reference proteome</keyword>
<keyword id="KW-0812">Transmembrane</keyword>
<keyword id="KW-1133">Transmembrane helix</keyword>
<sequence length="102" mass="11426">MAETWVSEIMTQALGCLQAFSSEFALEWESSDMKAAIFKLLLGWIVLSLTAILLAWKSYGPTVNSIYYRQGMGGQNGGTPEYPARFPVWESSSTESLKRHQE</sequence>
<accession>Q3KPU7</accession>
<organism>
    <name type="scientific">Xenopus laevis</name>
    <name type="common">African clawed frog</name>
    <dbReference type="NCBI Taxonomy" id="8355"/>
    <lineage>
        <taxon>Eukaryota</taxon>
        <taxon>Metazoa</taxon>
        <taxon>Chordata</taxon>
        <taxon>Craniata</taxon>
        <taxon>Vertebrata</taxon>
        <taxon>Euteleostomi</taxon>
        <taxon>Amphibia</taxon>
        <taxon>Batrachia</taxon>
        <taxon>Anura</taxon>
        <taxon>Pipoidea</taxon>
        <taxon>Pipidae</taxon>
        <taxon>Xenopodinae</taxon>
        <taxon>Xenopus</taxon>
        <taxon>Xenopus</taxon>
    </lineage>
</organism>
<proteinExistence type="inferred from homology"/>
<feature type="chain" id="PRO_0000301683" description="T-cell leukemia translocation-altered gene protein homolog">
    <location>
        <begin position="1"/>
        <end position="102"/>
    </location>
</feature>
<feature type="transmembrane region" description="Helical" evidence="1">
    <location>
        <begin position="36"/>
        <end position="56"/>
    </location>
</feature>
<reference key="1">
    <citation type="submission" date="2005-10" db="EMBL/GenBank/DDBJ databases">
        <authorList>
            <consortium name="NIH - Xenopus Gene Collection (XGC) project"/>
        </authorList>
    </citation>
    <scope>NUCLEOTIDE SEQUENCE [LARGE SCALE MRNA]</scope>
    <source>
        <tissue>Testis</tissue>
    </source>
</reference>
<dbReference type="EMBL" id="BC106548">
    <property type="protein sequence ID" value="AAI06549.1"/>
    <property type="molecule type" value="mRNA"/>
</dbReference>
<dbReference type="RefSeq" id="NP_001089779.1">
    <property type="nucleotide sequence ID" value="NM_001096310.1"/>
</dbReference>
<dbReference type="DNASU" id="734844"/>
<dbReference type="GeneID" id="734844"/>
<dbReference type="KEGG" id="xla:734844"/>
<dbReference type="AGR" id="Xenbase:XB-GENE-954036"/>
<dbReference type="CTD" id="734844"/>
<dbReference type="Xenbase" id="XB-GENE-954036">
    <property type="gene designation" value="tcta.S"/>
</dbReference>
<dbReference type="OMA" id="SMWESTS"/>
<dbReference type="OrthoDB" id="9529463at2759"/>
<dbReference type="Proteomes" id="UP000186698">
    <property type="component" value="Chromosome 4S"/>
</dbReference>
<dbReference type="Bgee" id="734844">
    <property type="expression patterns" value="Expressed in muscle tissue and 19 other cell types or tissues"/>
</dbReference>
<dbReference type="GO" id="GO:0016020">
    <property type="term" value="C:membrane"/>
    <property type="evidence" value="ECO:0007669"/>
    <property type="project" value="UniProtKB-SubCell"/>
</dbReference>
<dbReference type="GO" id="GO:0072675">
    <property type="term" value="P:osteoclast fusion"/>
    <property type="evidence" value="ECO:0000318"/>
    <property type="project" value="GO_Central"/>
</dbReference>
<dbReference type="InterPro" id="IPR016560">
    <property type="entry name" value="TCTA"/>
</dbReference>
<dbReference type="PANTHER" id="PTHR32267">
    <property type="entry name" value="T-CELL LEUKEMIA TRANSLOCATION-ALTERED GENE PROTEIN"/>
    <property type="match status" value="1"/>
</dbReference>
<dbReference type="PANTHER" id="PTHR32267:SF2">
    <property type="entry name" value="T-CELL LEUKEMIA TRANSLOCATION-ALTERED GENE PROTEIN"/>
    <property type="match status" value="1"/>
</dbReference>
<dbReference type="Pfam" id="PF15128">
    <property type="entry name" value="T_cell_tran_alt"/>
    <property type="match status" value="1"/>
</dbReference>
<dbReference type="PIRSF" id="PIRSF009935">
    <property type="entry name" value="TCTA"/>
    <property type="match status" value="1"/>
</dbReference>
<name>TCTA_XENLA</name>
<gene>
    <name type="primary">tcta</name>
</gene>
<evidence type="ECO:0000255" key="1"/>
<evidence type="ECO:0000305" key="2"/>
<comment type="subcellular location">
    <subcellularLocation>
        <location evidence="2">Membrane</location>
        <topology evidence="2">Single-pass membrane protein</topology>
    </subcellularLocation>
</comment>
<comment type="similarity">
    <text evidence="2">Belongs to the TCTA family.</text>
</comment>